<organism>
    <name type="scientific">Influenza A virus (strain A/Turkey/Ireland/1378/1983 H5N8)</name>
    <dbReference type="NCBI Taxonomy" id="380285"/>
    <lineage>
        <taxon>Viruses</taxon>
        <taxon>Riboviria</taxon>
        <taxon>Orthornavirae</taxon>
        <taxon>Negarnaviricota</taxon>
        <taxon>Polyploviricotina</taxon>
        <taxon>Insthoviricetes</taxon>
        <taxon>Articulavirales</taxon>
        <taxon>Orthomyxoviridae</taxon>
        <taxon>Alphainfluenzavirus</taxon>
        <taxon>Alphainfluenzavirus influenzae</taxon>
        <taxon>Influenza A virus</taxon>
    </lineage>
</organism>
<accession>Q0A2F8</accession>
<dbReference type="EC" id="3.1.-.-" evidence="2"/>
<dbReference type="EMBL" id="CY015094">
    <property type="protein sequence ID" value="ABI85124.1"/>
    <property type="molecule type" value="Genomic_RNA"/>
</dbReference>
<dbReference type="SMR" id="Q0A2F8"/>
<dbReference type="Proteomes" id="UP000008583">
    <property type="component" value="Genome"/>
</dbReference>
<dbReference type="GO" id="GO:0030430">
    <property type="term" value="C:host cell cytoplasm"/>
    <property type="evidence" value="ECO:0007669"/>
    <property type="project" value="UniProtKB-SubCell"/>
</dbReference>
<dbReference type="GO" id="GO:0042025">
    <property type="term" value="C:host cell nucleus"/>
    <property type="evidence" value="ECO:0007669"/>
    <property type="project" value="UniProtKB-SubCell"/>
</dbReference>
<dbReference type="GO" id="GO:0004519">
    <property type="term" value="F:endonuclease activity"/>
    <property type="evidence" value="ECO:0007669"/>
    <property type="project" value="UniProtKB-KW"/>
</dbReference>
<dbReference type="GO" id="GO:0046872">
    <property type="term" value="F:metal ion binding"/>
    <property type="evidence" value="ECO:0007669"/>
    <property type="project" value="UniProtKB-KW"/>
</dbReference>
<dbReference type="GO" id="GO:0003723">
    <property type="term" value="F:RNA binding"/>
    <property type="evidence" value="ECO:0007669"/>
    <property type="project" value="UniProtKB-UniRule"/>
</dbReference>
<dbReference type="GO" id="GO:0075526">
    <property type="term" value="P:cap snatching"/>
    <property type="evidence" value="ECO:0007669"/>
    <property type="project" value="UniProtKB-UniRule"/>
</dbReference>
<dbReference type="GO" id="GO:0006351">
    <property type="term" value="P:DNA-templated transcription"/>
    <property type="evidence" value="ECO:0007669"/>
    <property type="project" value="UniProtKB-UniRule"/>
</dbReference>
<dbReference type="GO" id="GO:0039657">
    <property type="term" value="P:symbiont-mediated suppression of host gene expression"/>
    <property type="evidence" value="ECO:0007669"/>
    <property type="project" value="UniProtKB-KW"/>
</dbReference>
<dbReference type="GO" id="GO:0039523">
    <property type="term" value="P:symbiont-mediated suppression of host mRNA transcription via inhibition of RNA polymerase II activity"/>
    <property type="evidence" value="ECO:0007669"/>
    <property type="project" value="UniProtKB-UniRule"/>
</dbReference>
<dbReference type="GO" id="GO:0039694">
    <property type="term" value="P:viral RNA genome replication"/>
    <property type="evidence" value="ECO:0007669"/>
    <property type="project" value="InterPro"/>
</dbReference>
<dbReference type="GO" id="GO:0075523">
    <property type="term" value="P:viral translational frameshifting"/>
    <property type="evidence" value="ECO:0007669"/>
    <property type="project" value="UniProtKB-KW"/>
</dbReference>
<dbReference type="FunFam" id="3.40.91.90:FF:000001">
    <property type="entry name" value="Polymerase acidic protein"/>
    <property type="match status" value="1"/>
</dbReference>
<dbReference type="Gene3D" id="3.40.91.90">
    <property type="entry name" value="Influenza RNA-dependent RNA polymerase subunit PA, endonuclease domain"/>
    <property type="match status" value="1"/>
</dbReference>
<dbReference type="HAMAP" id="MF_04063">
    <property type="entry name" value="INFV_PA"/>
    <property type="match status" value="1"/>
</dbReference>
<dbReference type="InterPro" id="IPR037534">
    <property type="entry name" value="INFV_PA"/>
</dbReference>
<dbReference type="InterPro" id="IPR001009">
    <property type="entry name" value="PA/PA-X"/>
</dbReference>
<dbReference type="InterPro" id="IPR038372">
    <property type="entry name" value="PA/PA-X_sf"/>
</dbReference>
<dbReference type="Pfam" id="PF00603">
    <property type="entry name" value="Flu_PA"/>
    <property type="match status" value="1"/>
</dbReference>
<organismHost>
    <name type="scientific">Aves</name>
    <dbReference type="NCBI Taxonomy" id="8782"/>
</organismHost>
<comment type="function">
    <text evidence="2">Plays an essential role in viral RNA transcription and replication by forming the heterotrimeric polymerase complex together with PB1 and PB2 subunits. The complex transcribes viral mRNAs by using a unique mechanism called cap-snatching. It consists in the hijacking and cleavage of host capped pre-mRNAs. These short capped RNAs are then used as primers for viral mRNAs. The PB2 subunit is responsible for the binding of the 5' cap of cellular pre-mRNAs which are subsequently cleaved after 10-13 nucleotides by the PA subunit that carries the endonuclease activity.</text>
</comment>
<comment type="cofactor">
    <cofactor evidence="2">
        <name>Mn(2+)</name>
        <dbReference type="ChEBI" id="CHEBI:29035"/>
    </cofactor>
    <text evidence="2">Binds 2 manganese ions per subunit.</text>
</comment>
<comment type="subunit">
    <text evidence="1 2">Influenza RNA polymerase is composed of three subunits: PB1, PB2 and PA. Interacts (via C-terminus) with PB1 (via N-terminus).</text>
</comment>
<comment type="subcellular location">
    <subcellularLocation>
        <location evidence="2">Host cytoplasm</location>
    </subcellularLocation>
    <subcellularLocation>
        <location evidence="2">Host nucleus</location>
    </subcellularLocation>
    <text evidence="1 2">PB1 and PA are transported in the host nucleus as a complex.</text>
</comment>
<comment type="alternative products">
    <event type="ribosomal frameshifting"/>
    <isoform>
        <id>Q0A2F8-1</id>
        <name>PA</name>
        <sequence type="displayed"/>
    </isoform>
    <isoform>
        <id>P0DJV5-1</id>
        <name>PA-X</name>
        <sequence type="external"/>
    </isoform>
</comment>
<comment type="PTM">
    <text evidence="1 2">Phosphorylated on serines and threonines by host kinases, including human casein kinase II.</text>
</comment>
<comment type="similarity">
    <text evidence="2">Belongs to the influenza viruses PA family.</text>
</comment>
<evidence type="ECO:0000250" key="1">
    <source>
        <dbReference type="UniProtKB" id="P03433"/>
    </source>
</evidence>
<evidence type="ECO:0000255" key="2">
    <source>
        <dbReference type="HAMAP-Rule" id="MF_04063"/>
    </source>
</evidence>
<sequence length="716" mass="82581">MEDFVRQCFNPMIVELAEKAMKEYGEDPKIETNKFAAICTHLEACFMYSDFHFIDERGESTIVESGDPNALLKHRFEIIEGRDRTMAWTVVNSICNTTGVEKPKFLPDLYDYKENRFIEIGVTRREVHIYYLEKANKIKSEKTHIHIFSFTGEEMATKADYTLDEESRARIKTRLFTIRQEMASRGLWDSFRQSERGEETIEERFEITGTMRRLADQSLPPNFSSLENFRAYVDGFEPNGCIEGKLSQMSKEVNARIEPFLKTTPRPLRLPDGPPCSQRSKFLLMDALKLSIEDPSHEGEGIPLYDAIKCMKTFFGWKEPNIIKPHEKGINPNYLLAWKQVLAELQDIENEEKTPKTKNMKKTSQLKWALGENMAPEKVDFEDCKDVNDLKQYDSEEPEPRSLASWIQSEFNKACELTDSSWIELDEIGEDVAPIEHIASMRRNYFTAEVSHCRATEYIMKGVYINTALLNASCAAMDEFQLIPMISKCRTKEGRRKTNLYGFIIKGRSHLRNDTDVVNFVSMEFSLTDPRLEPHKWEKYCVLEIGDMLLRTAIGQVSRPMFLYVRTNGTSKIKMKWGMEMRRCLLQSLQQIESMIEAESSIKEKDMTKEFFENRSETWPIGESPKGVEEGSIGKVCRTLLAKSVFNSLYASPQLEGFSAESRKLLLIVQALRDNLEPGTFDLGGLYEAIEECLINDPWVLLNASWFNSFLTHALK</sequence>
<name>PA_I83A4</name>
<reference key="1">
    <citation type="journal article" date="2006" name="Science">
        <title>Large-scale sequence analysis of avian influenza isolates.</title>
        <authorList>
            <person name="Obenauer J.C."/>
            <person name="Denson J."/>
            <person name="Mehta P.K."/>
            <person name="Su X."/>
            <person name="Mukatira S."/>
            <person name="Finkelstein D.B."/>
            <person name="Xu X."/>
            <person name="Wang J."/>
            <person name="Ma J."/>
            <person name="Fan Y."/>
            <person name="Rakestraw K.M."/>
            <person name="Webster R.G."/>
            <person name="Hoffmann E."/>
            <person name="Krauss S."/>
            <person name="Zheng J."/>
            <person name="Zhang Z."/>
            <person name="Naeve C.W."/>
        </authorList>
    </citation>
    <scope>NUCLEOTIDE SEQUENCE [GENOMIC RNA]</scope>
</reference>
<gene>
    <name evidence="2" type="primary">PA</name>
</gene>
<protein>
    <recommendedName>
        <fullName evidence="2">Polymerase acidic protein</fullName>
        <ecNumber evidence="2">3.1.-.-</ecNumber>
    </recommendedName>
    <alternativeName>
        <fullName evidence="2">RNA-directed RNA polymerase subunit P2</fullName>
    </alternativeName>
</protein>
<keyword id="KW-1157">Cap snatching</keyword>
<keyword id="KW-0255">Endonuclease</keyword>
<keyword id="KW-1262">Eukaryotic host gene expression shutoff by virus</keyword>
<keyword id="KW-1191">Eukaryotic host transcription shutoff by virus</keyword>
<keyword id="KW-1035">Host cytoplasm</keyword>
<keyword id="KW-1190">Host gene expression shutoff by virus</keyword>
<keyword id="KW-1048">Host nucleus</keyword>
<keyword id="KW-0945">Host-virus interaction</keyword>
<keyword id="KW-0378">Hydrolase</keyword>
<keyword id="KW-1104">Inhibition of host RNA polymerase II by virus</keyword>
<keyword id="KW-0464">Manganese</keyword>
<keyword id="KW-0479">Metal-binding</keyword>
<keyword id="KW-0540">Nuclease</keyword>
<keyword id="KW-0597">Phosphoprotein</keyword>
<keyword id="KW-0688">Ribosomal frameshifting</keyword>
<feature type="chain" id="PRO_0000279262" description="Polymerase acidic protein">
    <location>
        <begin position="1"/>
        <end position="716"/>
    </location>
</feature>
<feature type="short sequence motif" description="Nuclear localization signal 1 (NLS1)" evidence="1 2">
    <location>
        <begin position="124"/>
        <end position="139"/>
    </location>
</feature>
<feature type="short sequence motif" description="Nuclear localization signal 2 (NLS2)" evidence="1 2">
    <location>
        <begin position="184"/>
        <end position="247"/>
    </location>
</feature>
<feature type="binding site" evidence="2">
    <location>
        <position position="41"/>
    </location>
    <ligand>
        <name>Mn(2+)</name>
        <dbReference type="ChEBI" id="CHEBI:29035"/>
        <label>1</label>
    </ligand>
</feature>
<feature type="binding site" evidence="2">
    <location>
        <position position="80"/>
    </location>
    <ligand>
        <name>Mn(2+)</name>
        <dbReference type="ChEBI" id="CHEBI:29035"/>
        <label>2</label>
    </ligand>
</feature>
<feature type="binding site" evidence="2">
    <location>
        <position position="108"/>
    </location>
    <ligand>
        <name>Mn(2+)</name>
        <dbReference type="ChEBI" id="CHEBI:29035"/>
        <label>1</label>
    </ligand>
</feature>
<feature type="binding site" evidence="2">
    <location>
        <position position="108"/>
    </location>
    <ligand>
        <name>Mn(2+)</name>
        <dbReference type="ChEBI" id="CHEBI:29035"/>
        <label>2</label>
    </ligand>
</feature>
<feature type="binding site" evidence="2">
    <location>
        <position position="119"/>
    </location>
    <ligand>
        <name>Mn(2+)</name>
        <dbReference type="ChEBI" id="CHEBI:29035"/>
        <label>1</label>
    </ligand>
</feature>
<feature type="binding site" evidence="2">
    <location>
        <position position="120"/>
    </location>
    <ligand>
        <name>Mn(2+)</name>
        <dbReference type="ChEBI" id="CHEBI:29035"/>
        <label>1</label>
    </ligand>
</feature>
<proteinExistence type="inferred from homology"/>